<protein>
    <recommendedName>
        <fullName evidence="1">Photosystem I P700 chlorophyll a apoprotein A2</fullName>
        <ecNumber evidence="1">1.97.1.12</ecNumber>
    </recommendedName>
    <alternativeName>
        <fullName evidence="1">PSI-B</fullName>
    </alternativeName>
    <alternativeName>
        <fullName evidence="1">PsaB</fullName>
    </alternativeName>
</protein>
<accession>Q8S8X5</accession>
<geneLocation type="chloroplast"/>
<sequence>MALRFPRFSQGLAQDPTTRRIWFGIATAHDFESHDDITEERLYQNIFASHFGQLAIIFLWTSGNLFHVAWQGNFESWVQDPLHVRPIAHAIWDPHFGQPAVEAFTRGGALGPVNIAYSGVYQWWYTIGLRTNEDLYTGALFLLFLSAISLIAGWLHLQPKWKPSVSWFKNAESRLNHHLSGLFGVSSLAWTGHLVHVAIPASRGESVRWNNFLDVLPHPQGLGPLFTGQWNLYAQNPDSSSHLFGTAEGAGTAILTLLGGFHPQTQSLWLTDIAHHHLAIAFIFLVAGHMYRTNFGIGHSMKDLLDAHIPPGGRLGRGHKGLYDTINNSLHFQLGLALASLGVITSLVAQHMYSLPAYAFIAQDFTTQAALYTHHQYIAGFIMTGAFAHGAILVIRDYNPEQNEDNVLARMLDHKEAIISHLSWASLFLGFHTLGLYVHNDVMLAFGTPEKQILIEPIFAQWIQSAHGKTSYGFDVLLSSTSGPAFNAGRSIWLPGWLNAVNENSNSLFLTIGPGDFLVHHAIALGLHTTTLILVKGALDARGSKLMPDKKDFGYSFPCDGPGRGGTCDISAWDAFYLAVFWMLNTIGWVTFYWHWKHITLWQGNVSQFNESSTYLMGWLRDYLWLNSSQLINGYNPFGMNSLSVWAWMFLFGHLVWATGFMFLISWRGYWQELIETLAWAHERTPLANLIRWRDKPVALSIVQARLVGLAHFSVGYIFTYAAFLIASTSGKFG</sequence>
<evidence type="ECO:0000255" key="1">
    <source>
        <dbReference type="HAMAP-Rule" id="MF_00482"/>
    </source>
</evidence>
<comment type="function">
    <text evidence="1">PsaA and PsaB bind P700, the primary electron donor of photosystem I (PSI), as well as the electron acceptors A0, A1 and FX. PSI is a plastocyanin-ferredoxin oxidoreductase, converting photonic excitation into a charge separation, which transfers an electron from the donor P700 chlorophyll pair to the spectroscopically characterized acceptors A0, A1, FX, FA and FB in turn. Oxidized P700 is reduced on the lumenal side of the thylakoid membrane by plastocyanin.</text>
</comment>
<comment type="catalytic activity">
    <reaction evidence="1">
        <text>reduced [plastocyanin] + hnu + oxidized [2Fe-2S]-[ferredoxin] = oxidized [plastocyanin] + reduced [2Fe-2S]-[ferredoxin]</text>
        <dbReference type="Rhea" id="RHEA:30407"/>
        <dbReference type="Rhea" id="RHEA-COMP:10000"/>
        <dbReference type="Rhea" id="RHEA-COMP:10001"/>
        <dbReference type="Rhea" id="RHEA-COMP:10039"/>
        <dbReference type="Rhea" id="RHEA-COMP:10040"/>
        <dbReference type="ChEBI" id="CHEBI:29036"/>
        <dbReference type="ChEBI" id="CHEBI:30212"/>
        <dbReference type="ChEBI" id="CHEBI:33737"/>
        <dbReference type="ChEBI" id="CHEBI:33738"/>
        <dbReference type="ChEBI" id="CHEBI:49552"/>
        <dbReference type="EC" id="1.97.1.12"/>
    </reaction>
</comment>
<comment type="cofactor">
    <text evidence="1">P700 is a chlorophyll a/chlorophyll a' dimer, A0 is one or more chlorophyll a, A1 is one or both phylloquinones and FX is a shared 4Fe-4S iron-sulfur center.</text>
</comment>
<comment type="subunit">
    <text evidence="1">The PsaA/B heterodimer binds the P700 chlorophyll special pair and subsequent electron acceptors. PSI consists of a core antenna complex that captures photons, and an electron transfer chain that converts photonic excitation into a charge separation. The eukaryotic PSI reaction center is composed of at least 11 subunits.</text>
</comment>
<comment type="subcellular location">
    <subcellularLocation>
        <location evidence="1">Plastid</location>
        <location evidence="1">Chloroplast thylakoid membrane</location>
        <topology evidence="1">Multi-pass membrane protein</topology>
    </subcellularLocation>
</comment>
<comment type="similarity">
    <text evidence="1">Belongs to the PsaA/PsaB family.</text>
</comment>
<keyword id="KW-0004">4Fe-4S</keyword>
<keyword id="KW-0148">Chlorophyll</keyword>
<keyword id="KW-0150">Chloroplast</keyword>
<keyword id="KW-0157">Chromophore</keyword>
<keyword id="KW-0249">Electron transport</keyword>
<keyword id="KW-0408">Iron</keyword>
<keyword id="KW-0411">Iron-sulfur</keyword>
<keyword id="KW-0460">Magnesium</keyword>
<keyword id="KW-0472">Membrane</keyword>
<keyword id="KW-0479">Metal-binding</keyword>
<keyword id="KW-0560">Oxidoreductase</keyword>
<keyword id="KW-0602">Photosynthesis</keyword>
<keyword id="KW-0603">Photosystem I</keyword>
<keyword id="KW-0934">Plastid</keyword>
<keyword id="KW-0793">Thylakoid</keyword>
<keyword id="KW-0812">Transmembrane</keyword>
<keyword id="KW-1133">Transmembrane helix</keyword>
<keyword id="KW-0813">Transport</keyword>
<proteinExistence type="inferred from homology"/>
<organism>
    <name type="scientific">Atropa belladonna</name>
    <name type="common">Belladonna</name>
    <name type="synonym">Deadly nightshade</name>
    <dbReference type="NCBI Taxonomy" id="33113"/>
    <lineage>
        <taxon>Eukaryota</taxon>
        <taxon>Viridiplantae</taxon>
        <taxon>Streptophyta</taxon>
        <taxon>Embryophyta</taxon>
        <taxon>Tracheophyta</taxon>
        <taxon>Spermatophyta</taxon>
        <taxon>Magnoliopsida</taxon>
        <taxon>eudicotyledons</taxon>
        <taxon>Gunneridae</taxon>
        <taxon>Pentapetalae</taxon>
        <taxon>asterids</taxon>
        <taxon>lamiids</taxon>
        <taxon>Solanales</taxon>
        <taxon>Solanaceae</taxon>
        <taxon>Solanoideae</taxon>
        <taxon>Hyoscyameae</taxon>
        <taxon>Atropa</taxon>
    </lineage>
</organism>
<feature type="chain" id="PRO_0000088605" description="Photosystem I P700 chlorophyll a apoprotein A2">
    <location>
        <begin position="1"/>
        <end position="734"/>
    </location>
</feature>
<feature type="transmembrane region" description="Helical; Name=I" evidence="1">
    <location>
        <begin position="46"/>
        <end position="69"/>
    </location>
</feature>
<feature type="transmembrane region" description="Helical; Name=II" evidence="1">
    <location>
        <begin position="135"/>
        <end position="158"/>
    </location>
</feature>
<feature type="transmembrane region" description="Helical; Name=III" evidence="1">
    <location>
        <begin position="175"/>
        <end position="199"/>
    </location>
</feature>
<feature type="transmembrane region" description="Helical; Name=IV" evidence="1">
    <location>
        <begin position="273"/>
        <end position="291"/>
    </location>
</feature>
<feature type="transmembrane region" description="Helical; Name=V" evidence="1">
    <location>
        <begin position="330"/>
        <end position="353"/>
    </location>
</feature>
<feature type="transmembrane region" description="Helical; Name=VI" evidence="1">
    <location>
        <begin position="369"/>
        <end position="395"/>
    </location>
</feature>
<feature type="transmembrane region" description="Helical; Name=VII" evidence="1">
    <location>
        <begin position="417"/>
        <end position="439"/>
    </location>
</feature>
<feature type="transmembrane region" description="Helical; Name=VIII" evidence="1">
    <location>
        <begin position="517"/>
        <end position="535"/>
    </location>
</feature>
<feature type="transmembrane region" description="Helical; Name=IX" evidence="1">
    <location>
        <begin position="575"/>
        <end position="596"/>
    </location>
</feature>
<feature type="transmembrane region" description="Helical; Name=X" evidence="1">
    <location>
        <begin position="643"/>
        <end position="665"/>
    </location>
</feature>
<feature type="transmembrane region" description="Helical; Name=XI" evidence="1">
    <location>
        <begin position="707"/>
        <end position="727"/>
    </location>
</feature>
<feature type="binding site" evidence="1">
    <location>
        <position position="559"/>
    </location>
    <ligand>
        <name>[4Fe-4S] cluster</name>
        <dbReference type="ChEBI" id="CHEBI:49883"/>
        <note>ligand shared between dimeric partners</note>
    </ligand>
</feature>
<feature type="binding site" evidence="1">
    <location>
        <position position="568"/>
    </location>
    <ligand>
        <name>[4Fe-4S] cluster</name>
        <dbReference type="ChEBI" id="CHEBI:49883"/>
        <note>ligand shared between dimeric partners</note>
    </ligand>
</feature>
<feature type="binding site" description="axial binding residue" evidence="1">
    <location>
        <position position="654"/>
    </location>
    <ligand>
        <name>chlorophyll a</name>
        <dbReference type="ChEBI" id="CHEBI:58416"/>
        <label>B1</label>
    </ligand>
    <ligandPart>
        <name>Mg</name>
        <dbReference type="ChEBI" id="CHEBI:25107"/>
    </ligandPart>
</feature>
<feature type="binding site" description="axial binding residue" evidence="1">
    <location>
        <position position="662"/>
    </location>
    <ligand>
        <name>chlorophyll a</name>
        <dbReference type="ChEBI" id="CHEBI:58416"/>
        <label>B3</label>
    </ligand>
    <ligandPart>
        <name>Mg</name>
        <dbReference type="ChEBI" id="CHEBI:25107"/>
    </ligandPart>
</feature>
<feature type="binding site" evidence="1">
    <location>
        <position position="670"/>
    </location>
    <ligand>
        <name>chlorophyll a</name>
        <dbReference type="ChEBI" id="CHEBI:58416"/>
        <label>B3</label>
    </ligand>
</feature>
<feature type="binding site" evidence="1">
    <location>
        <position position="671"/>
    </location>
    <ligand>
        <name>phylloquinone</name>
        <dbReference type="ChEBI" id="CHEBI:18067"/>
        <label>B</label>
    </ligand>
</feature>
<name>PSAB_ATRBE</name>
<reference key="1">
    <citation type="journal article" date="2002" name="Mol. Biol. Evol.">
        <title>The plastid chromosome of Atropa belladonna and its comparison with that of Nicotiana tabacum: the role of RNA editing in generating divergence in the process of plant speciation.</title>
        <authorList>
            <person name="Schmitz-Linneweber C."/>
            <person name="Regel R."/>
            <person name="Du T.G."/>
            <person name="Hupfer H."/>
            <person name="Herrmann R.G."/>
            <person name="Maier R.M."/>
        </authorList>
    </citation>
    <scope>NUCLEOTIDE SEQUENCE [LARGE SCALE GENOMIC DNA]</scope>
    <source>
        <strain>cv. Ab5p(kan)</strain>
    </source>
</reference>
<gene>
    <name evidence="1" type="primary">psaB</name>
</gene>
<dbReference type="EC" id="1.97.1.12" evidence="1"/>
<dbReference type="EMBL" id="AJ316582">
    <property type="protein sequence ID" value="CAC88043.1"/>
    <property type="molecule type" value="Genomic_DNA"/>
</dbReference>
<dbReference type="RefSeq" id="NP_783231.1">
    <property type="nucleotide sequence ID" value="NC_004561.1"/>
</dbReference>
<dbReference type="SMR" id="Q8S8X5"/>
<dbReference type="GeneID" id="806483"/>
<dbReference type="GO" id="GO:0009535">
    <property type="term" value="C:chloroplast thylakoid membrane"/>
    <property type="evidence" value="ECO:0007669"/>
    <property type="project" value="UniProtKB-SubCell"/>
</dbReference>
<dbReference type="GO" id="GO:0009522">
    <property type="term" value="C:photosystem I"/>
    <property type="evidence" value="ECO:0007669"/>
    <property type="project" value="UniProtKB-KW"/>
</dbReference>
<dbReference type="GO" id="GO:0051539">
    <property type="term" value="F:4 iron, 4 sulfur cluster binding"/>
    <property type="evidence" value="ECO:0007669"/>
    <property type="project" value="UniProtKB-KW"/>
</dbReference>
<dbReference type="GO" id="GO:0016168">
    <property type="term" value="F:chlorophyll binding"/>
    <property type="evidence" value="ECO:0007669"/>
    <property type="project" value="UniProtKB-KW"/>
</dbReference>
<dbReference type="GO" id="GO:0009055">
    <property type="term" value="F:electron transfer activity"/>
    <property type="evidence" value="ECO:0007669"/>
    <property type="project" value="UniProtKB-UniRule"/>
</dbReference>
<dbReference type="GO" id="GO:0000287">
    <property type="term" value="F:magnesium ion binding"/>
    <property type="evidence" value="ECO:0007669"/>
    <property type="project" value="UniProtKB-UniRule"/>
</dbReference>
<dbReference type="GO" id="GO:0016491">
    <property type="term" value="F:oxidoreductase activity"/>
    <property type="evidence" value="ECO:0007669"/>
    <property type="project" value="UniProtKB-KW"/>
</dbReference>
<dbReference type="GO" id="GO:0015979">
    <property type="term" value="P:photosynthesis"/>
    <property type="evidence" value="ECO:0007669"/>
    <property type="project" value="UniProtKB-UniRule"/>
</dbReference>
<dbReference type="FunFam" id="1.20.1130.10:FF:000001">
    <property type="entry name" value="Photosystem I P700 chlorophyll a apoprotein A2"/>
    <property type="match status" value="1"/>
</dbReference>
<dbReference type="Gene3D" id="1.20.1130.10">
    <property type="entry name" value="Photosystem I PsaA/PsaB"/>
    <property type="match status" value="1"/>
</dbReference>
<dbReference type="HAMAP" id="MF_00482">
    <property type="entry name" value="PSI_PsaB"/>
    <property type="match status" value="1"/>
</dbReference>
<dbReference type="InterPro" id="IPR001280">
    <property type="entry name" value="PSI_PsaA/B"/>
</dbReference>
<dbReference type="InterPro" id="IPR020586">
    <property type="entry name" value="PSI_PsaA/B_CS"/>
</dbReference>
<dbReference type="InterPro" id="IPR036408">
    <property type="entry name" value="PSI_PsaA/B_sf"/>
</dbReference>
<dbReference type="InterPro" id="IPR006244">
    <property type="entry name" value="PSI_PsaB"/>
</dbReference>
<dbReference type="NCBIfam" id="TIGR01336">
    <property type="entry name" value="psaB"/>
    <property type="match status" value="1"/>
</dbReference>
<dbReference type="PANTHER" id="PTHR30128">
    <property type="entry name" value="OUTER MEMBRANE PROTEIN, OMPA-RELATED"/>
    <property type="match status" value="1"/>
</dbReference>
<dbReference type="PANTHER" id="PTHR30128:SF19">
    <property type="entry name" value="PHOTOSYSTEM I P700 CHLOROPHYLL A APOPROTEIN A1-RELATED"/>
    <property type="match status" value="1"/>
</dbReference>
<dbReference type="Pfam" id="PF00223">
    <property type="entry name" value="PsaA_PsaB"/>
    <property type="match status" value="1"/>
</dbReference>
<dbReference type="PIRSF" id="PIRSF002905">
    <property type="entry name" value="PSI_A"/>
    <property type="match status" value="1"/>
</dbReference>
<dbReference type="PRINTS" id="PR00257">
    <property type="entry name" value="PHOTSYSPSAAB"/>
</dbReference>
<dbReference type="SUPFAM" id="SSF81558">
    <property type="entry name" value="Photosystem I subunits PsaA/PsaB"/>
    <property type="match status" value="1"/>
</dbReference>
<dbReference type="PROSITE" id="PS00419">
    <property type="entry name" value="PHOTOSYSTEM_I_PSAAB"/>
    <property type="match status" value="1"/>
</dbReference>